<organism>
    <name type="scientific">Yersinia pseudotuberculosis serotype IB (strain PB1/+)</name>
    <dbReference type="NCBI Taxonomy" id="502801"/>
    <lineage>
        <taxon>Bacteria</taxon>
        <taxon>Pseudomonadati</taxon>
        <taxon>Pseudomonadota</taxon>
        <taxon>Gammaproteobacteria</taxon>
        <taxon>Enterobacterales</taxon>
        <taxon>Yersiniaceae</taxon>
        <taxon>Yersinia</taxon>
    </lineage>
</organism>
<protein>
    <recommendedName>
        <fullName evidence="1">Glycogen debranching enzyme</fullName>
        <ecNumber evidence="1">3.2.1.196</ecNumber>
    </recommendedName>
    <alternativeName>
        <fullName evidence="1">Limit dextrin alpha-1,6-maltotetraose-hydrolase</fullName>
    </alternativeName>
</protein>
<proteinExistence type="inferred from homology"/>
<keyword id="KW-0119">Carbohydrate metabolism</keyword>
<keyword id="KW-0321">Glycogen metabolism</keyword>
<keyword id="KW-0326">Glycosidase</keyword>
<keyword id="KW-0378">Hydrolase</keyword>
<comment type="function">
    <text evidence="1">Removes maltotriose and maltotetraose chains that are attached by 1,6-alpha-linkage to the limit dextrin main chain, generating a debranched limit dextrin.</text>
</comment>
<comment type="catalytic activity">
    <reaction evidence="1">
        <text>Hydrolysis of (1-&gt;6)-alpha-D-glucosidic linkages to branches with degrees of polymerization of three or four glucose residues in limit dextrin.</text>
        <dbReference type="EC" id="3.2.1.196"/>
    </reaction>
</comment>
<comment type="pathway">
    <text evidence="1">Glycan degradation; glycogen degradation.</text>
</comment>
<comment type="similarity">
    <text evidence="1">Belongs to the glycosyl hydrolase 13 family.</text>
</comment>
<evidence type="ECO:0000255" key="1">
    <source>
        <dbReference type="HAMAP-Rule" id="MF_01248"/>
    </source>
</evidence>
<reference key="1">
    <citation type="submission" date="2008-04" db="EMBL/GenBank/DDBJ databases">
        <title>Complete sequence of Yersinia pseudotuberculosis PB1/+.</title>
        <authorList>
            <person name="Copeland A."/>
            <person name="Lucas S."/>
            <person name="Lapidus A."/>
            <person name="Glavina del Rio T."/>
            <person name="Dalin E."/>
            <person name="Tice H."/>
            <person name="Bruce D."/>
            <person name="Goodwin L."/>
            <person name="Pitluck S."/>
            <person name="Munk A.C."/>
            <person name="Brettin T."/>
            <person name="Detter J.C."/>
            <person name="Han C."/>
            <person name="Tapia R."/>
            <person name="Schmutz J."/>
            <person name="Larimer F."/>
            <person name="Land M."/>
            <person name="Hauser L."/>
            <person name="Challacombe J.F."/>
            <person name="Green L."/>
            <person name="Lindler L.E."/>
            <person name="Nikolich M.P."/>
            <person name="Richardson P."/>
        </authorList>
    </citation>
    <scope>NUCLEOTIDE SEQUENCE [LARGE SCALE GENOMIC DNA]</scope>
    <source>
        <strain>PB1/+</strain>
    </source>
</reference>
<sequence length="662" mass="73880">MAVLTHGSPTPSGAYFDGKGINFTLFSAHAEQVTLCLFDEQGQERQIAMPARTGDIWHGYLPGGKPGQRYGYRVSGPFDPSRGHRFNPHKLLIDPRARALEGKVGDDPRFTGGVSQPDVRDSAAALPKCLVIHEEYDWQGDKPPAIPWGNTVVYEAHVRGLTQLHPDIPPELRGTYAALAHPALIEHLKTLGITTLELLPVQFHIDEPRLQKMGLSNYWGYNVLAPFAVDPDYASGREGISPLRELRDAVKALHNAGIEVILDVVFNHSAELDVFGPTLCQRGIDNASYYWLTPDGEYDNITGCGNALRLSHPYVTQWVIDCLNYWRDSCHVDGFRFDLGTVLGRTPAFDQHAPLFAALAADERLSACKLIAEPWDIGLGGYQLGNFPTGFSEWNDQYRDAMRGFWLRGEVPRGTFAQHFAASSRLFEQRGRLPSASINQITAHDGFTLLDLLCFNQKHNQMNGEENRDGSDNNHSNNFGCEGLVADAAIWQRRKACQRALLTTLLLSQGTPMLLAGDEQGHSQQGNNNAYCQNNILTWLDWGSADRALMTFTADLIRLRQQIPALTQDQWWQSGDSNVQWLDSQGQALSDAAWEQGCQQQLQILLSQRWLVLINATDHECEMHLPEGEWEGIPPFGVSDHAERLTTWRGSAHTICVLIKRD</sequence>
<name>GLGX_YERPB</name>
<accession>B2K6G0</accession>
<gene>
    <name evidence="1" type="primary">glgX</name>
    <name type="ordered locus">YPTS_3983</name>
</gene>
<feature type="chain" id="PRO_1000139881" description="Glycogen debranching enzyme">
    <location>
        <begin position="1"/>
        <end position="662"/>
    </location>
</feature>
<feature type="active site" description="Nucleophile" evidence="1">
    <location>
        <position position="338"/>
    </location>
</feature>
<feature type="active site" description="Proton donor" evidence="1">
    <location>
        <position position="373"/>
    </location>
</feature>
<feature type="site" description="Transition state stabilizer" evidence="1">
    <location>
        <position position="445"/>
    </location>
</feature>
<dbReference type="EC" id="3.2.1.196" evidence="1"/>
<dbReference type="EMBL" id="CP001048">
    <property type="protein sequence ID" value="ACC90932.1"/>
    <property type="molecule type" value="Genomic_DNA"/>
</dbReference>
<dbReference type="RefSeq" id="WP_012414084.1">
    <property type="nucleotide sequence ID" value="NZ_CP009780.1"/>
</dbReference>
<dbReference type="SMR" id="B2K6G0"/>
<dbReference type="CAZy" id="CBM48">
    <property type="family name" value="Carbohydrate-Binding Module Family 48"/>
</dbReference>
<dbReference type="CAZy" id="GH13">
    <property type="family name" value="Glycoside Hydrolase Family 13"/>
</dbReference>
<dbReference type="KEGG" id="ypb:YPTS_3983"/>
<dbReference type="PATRIC" id="fig|502801.10.peg.3450"/>
<dbReference type="UniPathway" id="UPA00165"/>
<dbReference type="GO" id="GO:0004133">
    <property type="term" value="F:glycogen debranching enzyme activity"/>
    <property type="evidence" value="ECO:0007669"/>
    <property type="project" value="UniProtKB-UniRule"/>
</dbReference>
<dbReference type="GO" id="GO:0004553">
    <property type="term" value="F:hydrolase activity, hydrolyzing O-glycosyl compounds"/>
    <property type="evidence" value="ECO:0007669"/>
    <property type="project" value="InterPro"/>
</dbReference>
<dbReference type="GO" id="GO:0005980">
    <property type="term" value="P:glycogen catabolic process"/>
    <property type="evidence" value="ECO:0007669"/>
    <property type="project" value="UniProtKB-UniRule"/>
</dbReference>
<dbReference type="CDD" id="cd11326">
    <property type="entry name" value="AmyAc_Glg_debranch"/>
    <property type="match status" value="1"/>
</dbReference>
<dbReference type="CDD" id="cd02856">
    <property type="entry name" value="E_set_GDE_Isoamylase_N"/>
    <property type="match status" value="1"/>
</dbReference>
<dbReference type="Gene3D" id="3.20.20.80">
    <property type="entry name" value="Glycosidases"/>
    <property type="match status" value="1"/>
</dbReference>
<dbReference type="Gene3D" id="2.60.40.1180">
    <property type="entry name" value="Golgi alpha-mannosidase II"/>
    <property type="match status" value="1"/>
</dbReference>
<dbReference type="Gene3D" id="2.60.40.10">
    <property type="entry name" value="Immunoglobulins"/>
    <property type="match status" value="1"/>
</dbReference>
<dbReference type="HAMAP" id="MF_01248">
    <property type="entry name" value="GlgX"/>
    <property type="match status" value="1"/>
</dbReference>
<dbReference type="InterPro" id="IPR040784">
    <property type="entry name" value="GlgX_C"/>
</dbReference>
<dbReference type="InterPro" id="IPR044505">
    <property type="entry name" value="GlgX_Isoamylase_N_E_set"/>
</dbReference>
<dbReference type="InterPro" id="IPR006047">
    <property type="entry name" value="Glyco_hydro_13_cat_dom"/>
</dbReference>
<dbReference type="InterPro" id="IPR004193">
    <property type="entry name" value="Glyco_hydro_13_N"/>
</dbReference>
<dbReference type="InterPro" id="IPR013780">
    <property type="entry name" value="Glyco_hydro_b"/>
</dbReference>
<dbReference type="InterPro" id="IPR022844">
    <property type="entry name" value="Glycogen_debranch_bac"/>
</dbReference>
<dbReference type="InterPro" id="IPR011837">
    <property type="entry name" value="Glycogen_debranch_GlgX"/>
</dbReference>
<dbReference type="InterPro" id="IPR017853">
    <property type="entry name" value="Glycoside_hydrolase_SF"/>
</dbReference>
<dbReference type="InterPro" id="IPR013783">
    <property type="entry name" value="Ig-like_fold"/>
</dbReference>
<dbReference type="InterPro" id="IPR014756">
    <property type="entry name" value="Ig_E-set"/>
</dbReference>
<dbReference type="NCBIfam" id="TIGR02100">
    <property type="entry name" value="glgX_debranch"/>
    <property type="match status" value="1"/>
</dbReference>
<dbReference type="NCBIfam" id="NF002983">
    <property type="entry name" value="PRK03705.1"/>
    <property type="match status" value="1"/>
</dbReference>
<dbReference type="PANTHER" id="PTHR43002">
    <property type="entry name" value="GLYCOGEN DEBRANCHING ENZYME"/>
    <property type="match status" value="1"/>
</dbReference>
<dbReference type="Pfam" id="PF02922">
    <property type="entry name" value="CBM_48"/>
    <property type="match status" value="1"/>
</dbReference>
<dbReference type="Pfam" id="PF18390">
    <property type="entry name" value="GlgX_C"/>
    <property type="match status" value="1"/>
</dbReference>
<dbReference type="SMART" id="SM00642">
    <property type="entry name" value="Aamy"/>
    <property type="match status" value="1"/>
</dbReference>
<dbReference type="SUPFAM" id="SSF51445">
    <property type="entry name" value="(Trans)glycosidases"/>
    <property type="match status" value="1"/>
</dbReference>
<dbReference type="SUPFAM" id="SSF81296">
    <property type="entry name" value="E set domains"/>
    <property type="match status" value="1"/>
</dbReference>
<dbReference type="SUPFAM" id="SSF51011">
    <property type="entry name" value="Glycosyl hydrolase domain"/>
    <property type="match status" value="1"/>
</dbReference>